<proteinExistence type="evidence at protein level"/>
<organism>
    <name type="scientific">Caenorhabditis elegans</name>
    <dbReference type="NCBI Taxonomy" id="6239"/>
    <lineage>
        <taxon>Eukaryota</taxon>
        <taxon>Metazoa</taxon>
        <taxon>Ecdysozoa</taxon>
        <taxon>Nematoda</taxon>
        <taxon>Chromadorea</taxon>
        <taxon>Rhabditida</taxon>
        <taxon>Rhabditina</taxon>
        <taxon>Rhabditomorpha</taxon>
        <taxon>Rhabditoidea</taxon>
        <taxon>Rhabditidae</taxon>
        <taxon>Peloderinae</taxon>
        <taxon>Caenorhabditis</taxon>
    </lineage>
</organism>
<protein>
    <recommendedName>
        <fullName evidence="7 8">Delta(9)-fatty-acid desaturase fat-6</fullName>
        <ecNumber evidence="4 5">1.14.19.-</ecNumber>
        <ecNumber evidence="4 5 6">1.14.19.1</ecNumber>
    </recommendedName>
    <alternativeName>
        <fullName>Fatty-acid desaturase 6</fullName>
        <shortName evidence="7 8">FAT-6</shortName>
    </alternativeName>
    <alternativeName>
        <fullName>Stearoyl-CoA desaturase fat-6</fullName>
    </alternativeName>
</protein>
<gene>
    <name type="primary">fat-6</name>
    <name type="ORF">VZK822L.1</name>
</gene>
<comment type="function">
    <text evidence="2 4 5 6">Delta(9)-fatty acid desaturase that acts preferentially on stearoyl-CoA (octadecanoyl-CoA) producing the monounsaturated oleoyl-CoA ((9Z)-octadecenoyl-CoA), one of the most abundant monounsaturated fatty acid in Caenorhabditis elegans phospholipids and triacylglycerols. Also acts on palmitoyl-CoA (hexadecanoyl-CoA), heptadecanoyl-CoA and (11E)-octadecenoyl-CoA (trans-vaccenoyl-CoA), the monounsaturated fatty acids (MUFAs) produced are further used as substrates to synthesize polyunsaturated fatty acids (PUFAs) by several other desaturases and elongases (PubMed:10872837, PubMed:16839188, PubMed:29237573). Unlike plants, Caenorhabditis elegans desaturases seem to use fatty acyl-CoAs as substrates (By similarity).</text>
</comment>
<comment type="catalytic activity">
    <reaction evidence="4 5 6">
        <text>octadecanoyl-CoA + 2 Fe(II)-[cytochrome b5] + O2 + 2 H(+) = (9Z)-octadecenoyl-CoA + 2 Fe(III)-[cytochrome b5] + 2 H2O</text>
        <dbReference type="Rhea" id="RHEA:19721"/>
        <dbReference type="Rhea" id="RHEA-COMP:10438"/>
        <dbReference type="Rhea" id="RHEA-COMP:10439"/>
        <dbReference type="ChEBI" id="CHEBI:15377"/>
        <dbReference type="ChEBI" id="CHEBI:15378"/>
        <dbReference type="ChEBI" id="CHEBI:15379"/>
        <dbReference type="ChEBI" id="CHEBI:29033"/>
        <dbReference type="ChEBI" id="CHEBI:29034"/>
        <dbReference type="ChEBI" id="CHEBI:57387"/>
        <dbReference type="ChEBI" id="CHEBI:57394"/>
        <dbReference type="EC" id="1.14.19.1"/>
    </reaction>
    <physiologicalReaction direction="left-to-right" evidence="4 5 6">
        <dbReference type="Rhea" id="RHEA:19722"/>
    </physiologicalReaction>
</comment>
<comment type="catalytic activity">
    <reaction evidence="4 5">
        <text>hexadecanoyl-CoA + 2 Fe(II)-[cytochrome b5] + O2 + 2 H(+) = (9Z)-hexadecenoyl-CoA + 2 Fe(III)-[cytochrome b5] + 2 H2O</text>
        <dbReference type="Rhea" id="RHEA:36931"/>
        <dbReference type="Rhea" id="RHEA-COMP:10438"/>
        <dbReference type="Rhea" id="RHEA-COMP:10439"/>
        <dbReference type="ChEBI" id="CHEBI:15377"/>
        <dbReference type="ChEBI" id="CHEBI:15378"/>
        <dbReference type="ChEBI" id="CHEBI:15379"/>
        <dbReference type="ChEBI" id="CHEBI:29033"/>
        <dbReference type="ChEBI" id="CHEBI:29034"/>
        <dbReference type="ChEBI" id="CHEBI:57379"/>
        <dbReference type="ChEBI" id="CHEBI:61540"/>
    </reaction>
    <physiologicalReaction direction="left-to-right" evidence="5 10">
        <dbReference type="Rhea" id="RHEA:36932"/>
    </physiologicalReaction>
</comment>
<comment type="catalytic activity">
    <reaction evidence="4">
        <text>heptadecanoyl-CoA + 2 Fe(II)-[cytochrome b5] + O2 + 2 H(+) = (9Z)-heptadecenoyl-CoA + 2 Fe(III)-[cytochrome b5] + 2 H2O</text>
        <dbReference type="Rhea" id="RHEA:36951"/>
        <dbReference type="Rhea" id="RHEA-COMP:10438"/>
        <dbReference type="Rhea" id="RHEA-COMP:10439"/>
        <dbReference type="ChEBI" id="CHEBI:15377"/>
        <dbReference type="ChEBI" id="CHEBI:15378"/>
        <dbReference type="ChEBI" id="CHEBI:15379"/>
        <dbReference type="ChEBI" id="CHEBI:29033"/>
        <dbReference type="ChEBI" id="CHEBI:29034"/>
        <dbReference type="ChEBI" id="CHEBI:74307"/>
        <dbReference type="ChEBI" id="CHEBI:74308"/>
    </reaction>
    <physiologicalReaction direction="left-to-right" evidence="10">
        <dbReference type="Rhea" id="RHEA:36952"/>
    </physiologicalReaction>
</comment>
<comment type="catalytic activity">
    <reaction evidence="4">
        <text>(11E)-octadecenoyl-CoA + 2 Fe(II)-[cytochrome b5] + O2 + 2 H(+) = (9Z,11E)-octadecadienoyl-CoA + 2 Fe(III)-[cytochrome b5] + 2 H2O</text>
        <dbReference type="Rhea" id="RHEA:36935"/>
        <dbReference type="Rhea" id="RHEA-COMP:10438"/>
        <dbReference type="Rhea" id="RHEA-COMP:10439"/>
        <dbReference type="ChEBI" id="CHEBI:15377"/>
        <dbReference type="ChEBI" id="CHEBI:15378"/>
        <dbReference type="ChEBI" id="CHEBI:15379"/>
        <dbReference type="ChEBI" id="CHEBI:29033"/>
        <dbReference type="ChEBI" id="CHEBI:29034"/>
        <dbReference type="ChEBI" id="CHEBI:74296"/>
        <dbReference type="ChEBI" id="CHEBI:74297"/>
    </reaction>
    <physiologicalReaction direction="left-to-right" evidence="10">
        <dbReference type="Rhea" id="RHEA:36936"/>
    </physiologicalReaction>
</comment>
<comment type="pathway">
    <text evidence="11 12">Lipid metabolism; monounsaturated fatty acid biosynthesis.</text>
</comment>
<comment type="pathway">
    <text evidence="11 12">Lipid metabolism; fatty acid metabolism.</text>
</comment>
<comment type="subcellular location">
    <subcellularLocation>
        <location evidence="9">Membrane</location>
        <topology evidence="9">Multi-pass membrane protein</topology>
    </subcellularLocation>
</comment>
<comment type="alternative products">
    <event type="alternative splicing"/>
    <isoform>
        <id>G5EGN2-1</id>
        <name>a</name>
        <sequence type="displayed"/>
    </isoform>
    <isoform>
        <id>G5EGN2-2</id>
        <name>b</name>
        <sequence type="described" ref="VSP_047791"/>
    </isoform>
    <isoform>
        <id>G5EGN2-3</id>
        <name>c</name>
        <sequence type="described" ref="VSP_047790"/>
    </isoform>
</comment>
<comment type="tissue specificity">
    <text evidence="5">Expressed in the intestine in adult worms and in all four larval stages. Additional expression in the hypodermis in all life stages.</text>
</comment>
<comment type="induction">
    <text evidence="5">Expression is regulated by nhr-80 and nhr-49.</text>
</comment>
<comment type="domain">
    <text evidence="1">The histidine box domains may contain the active site and/or be involved in metal ion binding.</text>
</comment>
<comment type="miscellaneous">
    <text evidence="6">Cytochrome b5 CYTB-5.1 is specifically required for the desaturase activity, its knockdown or mutation alters the enzyme activity.</text>
</comment>
<comment type="similarity">
    <text evidence="9">Belongs to the fatty acid desaturase type 1 family.</text>
</comment>
<sequence length="339" mass="39059">MTVKTRSNIAKKIEKDGGPETQYLAVDPNEIIQLQEESKKIPYKMEIVWRNVALFAALHFAAAIGLYQLIFEAKWQTVIFTFLLYVFGGFGITAGAHRLWSHKSYKATTPMRIFLMILNNIALQNDVIEWARDHRCHHKWTDTDADPHNTTRGFFFAHMGWLLVRKHPQVKEQGAKLDMSDLLSDPVLVFQRKHYFPLVILCCFILPTIIPVYFWKETAFIAFYTAGTFRYCFTLHATWCINSAAHYFGWKPYDSSITPVENVFTTIAAVGEGGHNFHHTFPQDYRTSEYSLKYNWTRVLIDTAAALGLVYDRKTACDEIIGRQVSNHGCDIQRGKSIM</sequence>
<evidence type="ECO:0000250" key="1"/>
<evidence type="ECO:0000250" key="2">
    <source>
        <dbReference type="UniProtKB" id="G5EGA5"/>
    </source>
</evidence>
<evidence type="ECO:0000255" key="3"/>
<evidence type="ECO:0000269" key="4">
    <source>
    </source>
</evidence>
<evidence type="ECO:0000269" key="5">
    <source>
    </source>
</evidence>
<evidence type="ECO:0000269" key="6">
    <source>
    </source>
</evidence>
<evidence type="ECO:0000303" key="7">
    <source>
    </source>
</evidence>
<evidence type="ECO:0000303" key="8">
    <source>
    </source>
</evidence>
<evidence type="ECO:0000305" key="9"/>
<evidence type="ECO:0000305" key="10">
    <source>
    </source>
</evidence>
<evidence type="ECO:0000305" key="11">
    <source>
    </source>
</evidence>
<evidence type="ECO:0000305" key="12">
    <source>
    </source>
</evidence>
<dbReference type="EC" id="1.14.19.-" evidence="4 5"/>
<dbReference type="EC" id="1.14.19.1" evidence="4 5 6"/>
<dbReference type="EMBL" id="AF260244">
    <property type="protein sequence ID" value="AAF97550.1"/>
    <property type="molecule type" value="mRNA"/>
</dbReference>
<dbReference type="EMBL" id="Z95123">
    <property type="protein sequence ID" value="CAB08356.1"/>
    <property type="molecule type" value="Genomic_DNA"/>
</dbReference>
<dbReference type="EMBL" id="Z95123">
    <property type="protein sequence ID" value="CBK19477.1"/>
    <property type="molecule type" value="Genomic_DNA"/>
</dbReference>
<dbReference type="EMBL" id="Z95123">
    <property type="protein sequence ID" value="CBK19478.1"/>
    <property type="molecule type" value="Genomic_DNA"/>
</dbReference>
<dbReference type="PIR" id="T28019">
    <property type="entry name" value="T28019"/>
</dbReference>
<dbReference type="RefSeq" id="NP_001255595.1">
    <molecule id="G5EGN2-1"/>
    <property type="nucleotide sequence ID" value="NM_001268666.4"/>
</dbReference>
<dbReference type="RefSeq" id="NP_001255596.1">
    <molecule id="G5EGN2-2"/>
    <property type="nucleotide sequence ID" value="NM_001268667.3"/>
</dbReference>
<dbReference type="RefSeq" id="NP_001255597.1">
    <molecule id="G5EGN2-3"/>
    <property type="nucleotide sequence ID" value="NM_001268668.3"/>
</dbReference>
<dbReference type="SMR" id="G5EGN2"/>
<dbReference type="BioGRID" id="43217">
    <property type="interactions" value="13"/>
</dbReference>
<dbReference type="FunCoup" id="G5EGN2">
    <property type="interactions" value="336"/>
</dbReference>
<dbReference type="STRING" id="6239.VZK822L.1a.2"/>
<dbReference type="SwissLipids" id="SLP:000000270"/>
<dbReference type="PaxDb" id="6239-VZK822L.1a.1"/>
<dbReference type="PeptideAtlas" id="G5EGN2"/>
<dbReference type="EnsemblMetazoa" id="VZK822L.1a.1">
    <molecule id="G5EGN2-1"/>
    <property type="protein sequence ID" value="VZK822L.1a.1"/>
    <property type="gene ID" value="WBGene00001398"/>
</dbReference>
<dbReference type="EnsemblMetazoa" id="VZK822L.1b.1">
    <molecule id="G5EGN2-2"/>
    <property type="protein sequence ID" value="VZK822L.1b.1"/>
    <property type="gene ID" value="WBGene00001398"/>
</dbReference>
<dbReference type="EnsemblMetazoa" id="VZK822L.1c.1">
    <molecule id="G5EGN2-3"/>
    <property type="protein sequence ID" value="VZK822L.1c.1"/>
    <property type="gene ID" value="WBGene00001398"/>
</dbReference>
<dbReference type="GeneID" id="178122"/>
<dbReference type="KEGG" id="cel:CELE_VZK822L.1"/>
<dbReference type="AGR" id="WB:WBGene00001398"/>
<dbReference type="CTD" id="178122"/>
<dbReference type="WormBase" id="VZK822L.1a">
    <molecule id="G5EGN2-1"/>
    <property type="protein sequence ID" value="CE18302"/>
    <property type="gene ID" value="WBGene00001398"/>
    <property type="gene designation" value="fat-6"/>
</dbReference>
<dbReference type="WormBase" id="VZK822L.1b">
    <molecule id="G5EGN2-2"/>
    <property type="protein sequence ID" value="CE44710"/>
    <property type="gene ID" value="WBGene00001398"/>
    <property type="gene designation" value="fat-6"/>
</dbReference>
<dbReference type="WormBase" id="VZK822L.1c">
    <molecule id="G5EGN2-3"/>
    <property type="protein sequence ID" value="CE44565"/>
    <property type="gene ID" value="WBGene00001398"/>
    <property type="gene designation" value="fat-6"/>
</dbReference>
<dbReference type="eggNOG" id="KOG1600">
    <property type="taxonomic scope" value="Eukaryota"/>
</dbReference>
<dbReference type="GeneTree" id="ENSGT00970000196153"/>
<dbReference type="InParanoid" id="G5EGN2"/>
<dbReference type="OMA" id="SCGESWH"/>
<dbReference type="OrthoDB" id="10260134at2759"/>
<dbReference type="PhylomeDB" id="G5EGN2"/>
<dbReference type="Reactome" id="R-CEL-75105">
    <property type="pathway name" value="Fatty acyl-CoA biosynthesis"/>
</dbReference>
<dbReference type="UniPathway" id="UPA00199"/>
<dbReference type="UniPathway" id="UPA01038"/>
<dbReference type="PRO" id="PR:G5EGN2"/>
<dbReference type="Proteomes" id="UP000001940">
    <property type="component" value="Chromosome IV"/>
</dbReference>
<dbReference type="Bgee" id="WBGene00001398">
    <property type="expression patterns" value="Expressed in larva and 4 other cell types or tissues"/>
</dbReference>
<dbReference type="GO" id="GO:0005789">
    <property type="term" value="C:endoplasmic reticulum membrane"/>
    <property type="evidence" value="ECO:0000250"/>
    <property type="project" value="WormBase"/>
</dbReference>
<dbReference type="GO" id="GO:0005506">
    <property type="term" value="F:iron ion binding"/>
    <property type="evidence" value="ECO:0000318"/>
    <property type="project" value="GO_Central"/>
</dbReference>
<dbReference type="GO" id="GO:0004768">
    <property type="term" value="F:stearoyl-CoA 9-desaturase activity"/>
    <property type="evidence" value="ECO:0000316"/>
    <property type="project" value="WormBase"/>
</dbReference>
<dbReference type="GO" id="GO:0045087">
    <property type="term" value="P:innate immune response"/>
    <property type="evidence" value="ECO:0000270"/>
    <property type="project" value="WormBase"/>
</dbReference>
<dbReference type="GO" id="GO:0042759">
    <property type="term" value="P:long-chain fatty acid biosynthetic process"/>
    <property type="evidence" value="ECO:0000316"/>
    <property type="project" value="WormBase"/>
</dbReference>
<dbReference type="GO" id="GO:0009791">
    <property type="term" value="P:post-embryonic development"/>
    <property type="evidence" value="ECO:0000316"/>
    <property type="project" value="WormBase"/>
</dbReference>
<dbReference type="GO" id="GO:0006636">
    <property type="term" value="P:unsaturated fatty acid biosynthetic process"/>
    <property type="evidence" value="ECO:0000318"/>
    <property type="project" value="GO_Central"/>
</dbReference>
<dbReference type="CDD" id="cd03505">
    <property type="entry name" value="Delta9-FADS-like"/>
    <property type="match status" value="1"/>
</dbReference>
<dbReference type="InterPro" id="IPR015876">
    <property type="entry name" value="Acyl-CoA_DS"/>
</dbReference>
<dbReference type="PANTHER" id="PTHR11351">
    <property type="entry name" value="ACYL-COA DESATURASE"/>
    <property type="match status" value="1"/>
</dbReference>
<dbReference type="PANTHER" id="PTHR11351:SF31">
    <property type="entry name" value="DESATURASE 1, ISOFORM A-RELATED"/>
    <property type="match status" value="1"/>
</dbReference>
<dbReference type="PRINTS" id="PR00075">
    <property type="entry name" value="FACDDSATRASE"/>
</dbReference>
<reference key="1">
    <citation type="journal article" date="2006" name="PLoS Genet.">
        <title>Genetic regulation of unsaturated fatty acid composition in C. elegans.</title>
        <authorList>
            <person name="Brock T.J."/>
            <person name="Browse J."/>
            <person name="Watts J.L."/>
        </authorList>
    </citation>
    <scope>NUCLEOTIDE SEQUENCE [MRNA] (ISOFORM A)</scope>
    <scope>FUNCTION</scope>
    <scope>CATALYTIC ACTIVITY</scope>
    <scope>PATHWAY</scope>
    <scope>TISSUE SPECIFICITY</scope>
    <scope>INDUCTION</scope>
</reference>
<reference key="2">
    <citation type="journal article" date="1998" name="Science">
        <title>Genome sequence of the nematode C. elegans: a platform for investigating biology.</title>
        <authorList>
            <consortium name="The C. elegans sequencing consortium"/>
        </authorList>
    </citation>
    <scope>NUCLEOTIDE SEQUENCE [LARGE SCALE GENOMIC DNA]</scope>
    <source>
        <strain>Bristol N2</strain>
    </source>
</reference>
<reference key="3">
    <citation type="journal article" date="2000" name="Biochem. Biophys. Res. Commun.">
        <title>A palmitoyl-CoA-specific delta9 fatty acid desaturase from Caenorhabditis elegans.</title>
        <authorList>
            <person name="Watts J.L."/>
            <person name="Browse J."/>
        </authorList>
    </citation>
    <scope>FUNCTION</scope>
    <scope>CATALYTIC ACTIVITY</scope>
</reference>
<reference key="4">
    <citation type="journal article" date="2018" name="Biochim. Biophys. Acta">
        <title>Identification of cytochrome b5 CYTB-5.1 and CYTB-5.2 in C. elegans; evidence for differential regulation of SCD.</title>
        <authorList>
            <person name="He B."/>
            <person name="Zhang J."/>
            <person name="Wang Y."/>
            <person name="Li Y."/>
            <person name="Zou X."/>
            <person name="Liang B."/>
        </authorList>
    </citation>
    <scope>FUNCTION</scope>
    <scope>CATALYTIC ACTIVITY</scope>
    <scope>PATHWAY</scope>
</reference>
<name>FAT6_CAEEL</name>
<feature type="chain" id="PRO_0000423388" description="Delta(9)-fatty-acid desaturase fat-6">
    <location>
        <begin position="1"/>
        <end position="339"/>
    </location>
</feature>
<feature type="transmembrane region" description="Helical" evidence="3">
    <location>
        <begin position="52"/>
        <end position="72"/>
    </location>
</feature>
<feature type="transmembrane region" description="Helical" evidence="3">
    <location>
        <begin position="77"/>
        <end position="97"/>
    </location>
</feature>
<feature type="transmembrane region" description="Helical" evidence="3">
    <location>
        <begin position="195"/>
        <end position="215"/>
    </location>
</feature>
<feature type="transmembrane region" description="Helical" evidence="3">
    <location>
        <begin position="219"/>
        <end position="241"/>
    </location>
</feature>
<feature type="splice variant" id="VSP_047790" description="In isoform c." evidence="9">
    <location>
        <begin position="1"/>
        <end position="110"/>
    </location>
</feature>
<feature type="splice variant" id="VSP_047791" description="In isoform b." evidence="9">
    <location>
        <begin position="1"/>
        <end position="44"/>
    </location>
</feature>
<keyword id="KW-0025">Alternative splicing</keyword>
<keyword id="KW-0275">Fatty acid biosynthesis</keyword>
<keyword id="KW-0276">Fatty acid metabolism</keyword>
<keyword id="KW-0444">Lipid biosynthesis</keyword>
<keyword id="KW-0443">Lipid metabolism</keyword>
<keyword id="KW-0472">Membrane</keyword>
<keyword id="KW-0560">Oxidoreductase</keyword>
<keyword id="KW-1185">Reference proteome</keyword>
<keyword id="KW-0812">Transmembrane</keyword>
<keyword id="KW-1133">Transmembrane helix</keyword>
<accession>G5EGN2</accession>
<accession>D3YT93</accession>
<accession>D3YT94</accession>